<keyword id="KW-0067">ATP-binding</keyword>
<keyword id="KW-0418">Kinase</keyword>
<keyword id="KW-0547">Nucleotide-binding</keyword>
<keyword id="KW-0808">Transferase</keyword>
<reference key="1">
    <citation type="journal article" date="2009" name="PLoS Genet.">
        <title>Organised genome dynamics in the Escherichia coli species results in highly diverse adaptive paths.</title>
        <authorList>
            <person name="Touchon M."/>
            <person name="Hoede C."/>
            <person name="Tenaillon O."/>
            <person name="Barbe V."/>
            <person name="Baeriswyl S."/>
            <person name="Bidet P."/>
            <person name="Bingen E."/>
            <person name="Bonacorsi S."/>
            <person name="Bouchier C."/>
            <person name="Bouvet O."/>
            <person name="Calteau A."/>
            <person name="Chiapello H."/>
            <person name="Clermont O."/>
            <person name="Cruveiller S."/>
            <person name="Danchin A."/>
            <person name="Diard M."/>
            <person name="Dossat C."/>
            <person name="Karoui M.E."/>
            <person name="Frapy E."/>
            <person name="Garry L."/>
            <person name="Ghigo J.M."/>
            <person name="Gilles A.M."/>
            <person name="Johnson J."/>
            <person name="Le Bouguenec C."/>
            <person name="Lescat M."/>
            <person name="Mangenot S."/>
            <person name="Martinez-Jehanne V."/>
            <person name="Matic I."/>
            <person name="Nassif X."/>
            <person name="Oztas S."/>
            <person name="Petit M.A."/>
            <person name="Pichon C."/>
            <person name="Rouy Z."/>
            <person name="Ruf C.S."/>
            <person name="Schneider D."/>
            <person name="Tourret J."/>
            <person name="Vacherie B."/>
            <person name="Vallenet D."/>
            <person name="Medigue C."/>
            <person name="Rocha E.P.C."/>
            <person name="Denamur E."/>
        </authorList>
    </citation>
    <scope>NUCLEOTIDE SEQUENCE [LARGE SCALE GENOMIC DNA]</scope>
    <source>
        <strain>UMN026 / ExPEC</strain>
    </source>
</reference>
<protein>
    <recommendedName>
        <fullName evidence="1">Thiamine kinase</fullName>
        <ecNumber evidence="1">2.7.1.89</ecNumber>
    </recommendedName>
</protein>
<feature type="chain" id="PRO_1000198091" description="Thiamine kinase">
    <location>
        <begin position="1"/>
        <end position="274"/>
    </location>
</feature>
<sequence length="274" mass="32538">MPFRSNNPITRDELLSRFFPQFHPVTTFNSGLSGGSFLIEHQGQRFVVRQPHDPDAPRFAFLRQYRALSQLPACIAPKPHLYLRDWMVVDYLPGEVKTYLPDTNELAGLLYYLHQQPRFGWRITLLPLLELYWQQSDPARRTVGWLRRLKRLRKAREPRPLRLSPLHMDVHAGNLVHSASGLKLIDWEYAGDGDIALELAAVWVENTDQHRQLVNDYATRAKIYPAQLWRQVRRWFPWLLMLKAGWFEYRWRQTGDQQFIRLADDTWRQLLIKQ</sequence>
<dbReference type="EC" id="2.7.1.89" evidence="1"/>
<dbReference type="EMBL" id="CU928163">
    <property type="protein sequence ID" value="CAR12493.1"/>
    <property type="molecule type" value="Genomic_DNA"/>
</dbReference>
<dbReference type="RefSeq" id="WP_001116587.1">
    <property type="nucleotide sequence ID" value="NC_011751.1"/>
</dbReference>
<dbReference type="RefSeq" id="YP_002412036.1">
    <property type="nucleotide sequence ID" value="NC_011751.1"/>
</dbReference>
<dbReference type="SMR" id="B7NAY4"/>
<dbReference type="STRING" id="585056.ECUMN_1284"/>
<dbReference type="KEGG" id="eum:ECUMN_1284"/>
<dbReference type="PATRIC" id="fig|585056.7.peg.1488"/>
<dbReference type="HOGENOM" id="CLU_055115_2_1_6"/>
<dbReference type="UniPathway" id="UPA00060">
    <property type="reaction ID" value="UER00596"/>
</dbReference>
<dbReference type="Proteomes" id="UP000007097">
    <property type="component" value="Chromosome"/>
</dbReference>
<dbReference type="GO" id="GO:0005524">
    <property type="term" value="F:ATP binding"/>
    <property type="evidence" value="ECO:0007669"/>
    <property type="project" value="UniProtKB-KW"/>
</dbReference>
<dbReference type="GO" id="GO:0019165">
    <property type="term" value="F:thiamine kinase activity"/>
    <property type="evidence" value="ECO:0007669"/>
    <property type="project" value="UniProtKB-UniRule"/>
</dbReference>
<dbReference type="GO" id="GO:0009229">
    <property type="term" value="P:thiamine diphosphate biosynthetic process"/>
    <property type="evidence" value="ECO:0007669"/>
    <property type="project" value="UniProtKB-UniRule"/>
</dbReference>
<dbReference type="GO" id="GO:0006772">
    <property type="term" value="P:thiamine metabolic process"/>
    <property type="evidence" value="ECO:0007669"/>
    <property type="project" value="InterPro"/>
</dbReference>
<dbReference type="FunFam" id="3.90.1200.10:FF:000004">
    <property type="entry name" value="Thiamine kinase"/>
    <property type="match status" value="1"/>
</dbReference>
<dbReference type="Gene3D" id="3.90.1200.10">
    <property type="match status" value="1"/>
</dbReference>
<dbReference type="HAMAP" id="MF_01604">
    <property type="entry name" value="Thiamine_kinase"/>
    <property type="match status" value="1"/>
</dbReference>
<dbReference type="InterPro" id="IPR002575">
    <property type="entry name" value="Aminoglycoside_PTrfase"/>
</dbReference>
<dbReference type="InterPro" id="IPR011009">
    <property type="entry name" value="Kinase-like_dom_sf"/>
</dbReference>
<dbReference type="InterPro" id="IPR014093">
    <property type="entry name" value="Thiamine_kinase"/>
</dbReference>
<dbReference type="NCBIfam" id="NF007620">
    <property type="entry name" value="PRK10271.1"/>
    <property type="match status" value="1"/>
</dbReference>
<dbReference type="NCBIfam" id="TIGR02721">
    <property type="entry name" value="ycfN_thiK"/>
    <property type="match status" value="1"/>
</dbReference>
<dbReference type="Pfam" id="PF01636">
    <property type="entry name" value="APH"/>
    <property type="match status" value="1"/>
</dbReference>
<dbReference type="SUPFAM" id="SSF56112">
    <property type="entry name" value="Protein kinase-like (PK-like)"/>
    <property type="match status" value="1"/>
</dbReference>
<name>THIK_ECOLU</name>
<gene>
    <name evidence="1" type="primary">thiK</name>
    <name type="ordered locus">ECUMN_1284</name>
</gene>
<proteinExistence type="inferred from homology"/>
<comment type="function">
    <text evidence="1">Catalyzes the ATP-dependent phosphorylation of thiamine to thiamine phosphate. Is involved in thiamine salvage.</text>
</comment>
<comment type="catalytic activity">
    <reaction evidence="1">
        <text>thiamine + ATP = thiamine phosphate + ADP + H(+)</text>
        <dbReference type="Rhea" id="RHEA:12012"/>
        <dbReference type="ChEBI" id="CHEBI:15378"/>
        <dbReference type="ChEBI" id="CHEBI:18385"/>
        <dbReference type="ChEBI" id="CHEBI:30616"/>
        <dbReference type="ChEBI" id="CHEBI:37575"/>
        <dbReference type="ChEBI" id="CHEBI:456216"/>
        <dbReference type="EC" id="2.7.1.89"/>
    </reaction>
    <physiologicalReaction direction="left-to-right" evidence="1">
        <dbReference type="Rhea" id="RHEA:12013"/>
    </physiologicalReaction>
</comment>
<comment type="pathway">
    <text evidence="1">Cofactor biosynthesis; thiamine diphosphate biosynthesis; thiamine phosphate from thiamine: step 1/1.</text>
</comment>
<comment type="similarity">
    <text evidence="1">Belongs to the thiamine kinase family.</text>
</comment>
<accession>B7NAY4</accession>
<organism>
    <name type="scientific">Escherichia coli O17:K52:H18 (strain UMN026 / ExPEC)</name>
    <dbReference type="NCBI Taxonomy" id="585056"/>
    <lineage>
        <taxon>Bacteria</taxon>
        <taxon>Pseudomonadati</taxon>
        <taxon>Pseudomonadota</taxon>
        <taxon>Gammaproteobacteria</taxon>
        <taxon>Enterobacterales</taxon>
        <taxon>Enterobacteriaceae</taxon>
        <taxon>Escherichia</taxon>
    </lineage>
</organism>
<evidence type="ECO:0000255" key="1">
    <source>
        <dbReference type="HAMAP-Rule" id="MF_01604"/>
    </source>
</evidence>